<evidence type="ECO:0000250" key="1"/>
<evidence type="ECO:0000255" key="2">
    <source>
        <dbReference type="HAMAP-Rule" id="MF_00403"/>
    </source>
</evidence>
<evidence type="ECO:0000305" key="3"/>
<dbReference type="EMBL" id="CP000447">
    <property type="protein sequence ID" value="ABI70006.1"/>
    <property type="molecule type" value="Genomic_DNA"/>
</dbReference>
<dbReference type="RefSeq" id="WP_011635635.1">
    <property type="nucleotide sequence ID" value="NC_008345.1"/>
</dbReference>
<dbReference type="SMR" id="Q089Q9"/>
<dbReference type="STRING" id="318167.Sfri_0143"/>
<dbReference type="KEGG" id="sfr:Sfri_0143"/>
<dbReference type="eggNOG" id="COG0048">
    <property type="taxonomic scope" value="Bacteria"/>
</dbReference>
<dbReference type="HOGENOM" id="CLU_104295_1_2_6"/>
<dbReference type="OrthoDB" id="9802366at2"/>
<dbReference type="Proteomes" id="UP000000684">
    <property type="component" value="Chromosome"/>
</dbReference>
<dbReference type="GO" id="GO:0015935">
    <property type="term" value="C:small ribosomal subunit"/>
    <property type="evidence" value="ECO:0007669"/>
    <property type="project" value="InterPro"/>
</dbReference>
<dbReference type="GO" id="GO:0019843">
    <property type="term" value="F:rRNA binding"/>
    <property type="evidence" value="ECO:0007669"/>
    <property type="project" value="UniProtKB-UniRule"/>
</dbReference>
<dbReference type="GO" id="GO:0003735">
    <property type="term" value="F:structural constituent of ribosome"/>
    <property type="evidence" value="ECO:0007669"/>
    <property type="project" value="InterPro"/>
</dbReference>
<dbReference type="GO" id="GO:0000049">
    <property type="term" value="F:tRNA binding"/>
    <property type="evidence" value="ECO:0007669"/>
    <property type="project" value="UniProtKB-UniRule"/>
</dbReference>
<dbReference type="GO" id="GO:0006412">
    <property type="term" value="P:translation"/>
    <property type="evidence" value="ECO:0007669"/>
    <property type="project" value="UniProtKB-UniRule"/>
</dbReference>
<dbReference type="CDD" id="cd03368">
    <property type="entry name" value="Ribosomal_S12"/>
    <property type="match status" value="1"/>
</dbReference>
<dbReference type="FunFam" id="2.40.50.140:FF:000001">
    <property type="entry name" value="30S ribosomal protein S12"/>
    <property type="match status" value="1"/>
</dbReference>
<dbReference type="Gene3D" id="2.40.50.140">
    <property type="entry name" value="Nucleic acid-binding proteins"/>
    <property type="match status" value="1"/>
</dbReference>
<dbReference type="HAMAP" id="MF_00403_B">
    <property type="entry name" value="Ribosomal_uS12_B"/>
    <property type="match status" value="1"/>
</dbReference>
<dbReference type="InterPro" id="IPR012340">
    <property type="entry name" value="NA-bd_OB-fold"/>
</dbReference>
<dbReference type="InterPro" id="IPR006032">
    <property type="entry name" value="Ribosomal_uS12"/>
</dbReference>
<dbReference type="InterPro" id="IPR005679">
    <property type="entry name" value="Ribosomal_uS12_bac"/>
</dbReference>
<dbReference type="NCBIfam" id="TIGR00981">
    <property type="entry name" value="rpsL_bact"/>
    <property type="match status" value="1"/>
</dbReference>
<dbReference type="PANTHER" id="PTHR11652">
    <property type="entry name" value="30S RIBOSOMAL PROTEIN S12 FAMILY MEMBER"/>
    <property type="match status" value="1"/>
</dbReference>
<dbReference type="Pfam" id="PF00164">
    <property type="entry name" value="Ribosom_S12_S23"/>
    <property type="match status" value="1"/>
</dbReference>
<dbReference type="PIRSF" id="PIRSF002133">
    <property type="entry name" value="Ribosomal_S12/S23"/>
    <property type="match status" value="1"/>
</dbReference>
<dbReference type="PRINTS" id="PR01034">
    <property type="entry name" value="RIBOSOMALS12"/>
</dbReference>
<dbReference type="SUPFAM" id="SSF50249">
    <property type="entry name" value="Nucleic acid-binding proteins"/>
    <property type="match status" value="1"/>
</dbReference>
<dbReference type="PROSITE" id="PS00055">
    <property type="entry name" value="RIBOSOMAL_S12"/>
    <property type="match status" value="1"/>
</dbReference>
<gene>
    <name evidence="2" type="primary">rpsL</name>
    <name type="ordered locus">Sfri_0143</name>
</gene>
<comment type="function">
    <text evidence="2">With S4 and S5 plays an important role in translational accuracy.</text>
</comment>
<comment type="function">
    <text evidence="2">Interacts with and stabilizes bases of the 16S rRNA that are involved in tRNA selection in the A site and with the mRNA backbone. Located at the interface of the 30S and 50S subunits, it traverses the body of the 30S subunit contacting proteins on the other side and probably holding the rRNA structure together. The combined cluster of proteins S8, S12 and S17 appears to hold together the shoulder and platform of the 30S subunit.</text>
</comment>
<comment type="subunit">
    <text evidence="2">Part of the 30S ribosomal subunit. Contacts proteins S8 and S17. May interact with IF1 in the 30S initiation complex.</text>
</comment>
<comment type="similarity">
    <text evidence="2">Belongs to the universal ribosomal protein uS12 family.</text>
</comment>
<proteinExistence type="inferred from homology"/>
<accession>Q089Q9</accession>
<name>RS12_SHEFN</name>
<sequence>MATVNQLVRKPRTPKVEKTNVPALNACPQKRGVCTRVYTTTPKKPNSALRKVARVRLTNGFEVTSYIGGEGHNLQEHSVILIRGGRVKDLPGVRYHTVRGALDCAGVTSRRQGRSKYGAKRPKS</sequence>
<organism>
    <name type="scientific">Shewanella frigidimarina (strain NCIMB 400)</name>
    <dbReference type="NCBI Taxonomy" id="318167"/>
    <lineage>
        <taxon>Bacteria</taxon>
        <taxon>Pseudomonadati</taxon>
        <taxon>Pseudomonadota</taxon>
        <taxon>Gammaproteobacteria</taxon>
        <taxon>Alteromonadales</taxon>
        <taxon>Shewanellaceae</taxon>
        <taxon>Shewanella</taxon>
    </lineage>
</organism>
<feature type="chain" id="PRO_0000263590" description="Small ribosomal subunit protein uS12">
    <location>
        <begin position="1"/>
        <end position="124"/>
    </location>
</feature>
<feature type="modified residue" description="3-methylthioaspartic acid" evidence="1">
    <location>
        <position position="89"/>
    </location>
</feature>
<protein>
    <recommendedName>
        <fullName evidence="2">Small ribosomal subunit protein uS12</fullName>
    </recommendedName>
    <alternativeName>
        <fullName evidence="3">30S ribosomal protein S12</fullName>
    </alternativeName>
</protein>
<keyword id="KW-0488">Methylation</keyword>
<keyword id="KW-1185">Reference proteome</keyword>
<keyword id="KW-0687">Ribonucleoprotein</keyword>
<keyword id="KW-0689">Ribosomal protein</keyword>
<keyword id="KW-0694">RNA-binding</keyword>
<keyword id="KW-0699">rRNA-binding</keyword>
<keyword id="KW-0820">tRNA-binding</keyword>
<reference key="1">
    <citation type="submission" date="2006-08" db="EMBL/GenBank/DDBJ databases">
        <title>Complete sequence of Shewanella frigidimarina NCIMB 400.</title>
        <authorList>
            <consortium name="US DOE Joint Genome Institute"/>
            <person name="Copeland A."/>
            <person name="Lucas S."/>
            <person name="Lapidus A."/>
            <person name="Barry K."/>
            <person name="Detter J.C."/>
            <person name="Glavina del Rio T."/>
            <person name="Hammon N."/>
            <person name="Israni S."/>
            <person name="Dalin E."/>
            <person name="Tice H."/>
            <person name="Pitluck S."/>
            <person name="Fredrickson J.K."/>
            <person name="Kolker E."/>
            <person name="McCuel L.A."/>
            <person name="DiChristina T."/>
            <person name="Nealson K.H."/>
            <person name="Newman D."/>
            <person name="Tiedje J.M."/>
            <person name="Zhou J."/>
            <person name="Romine M.F."/>
            <person name="Culley D.E."/>
            <person name="Serres M."/>
            <person name="Chertkov O."/>
            <person name="Brettin T."/>
            <person name="Bruce D."/>
            <person name="Han C."/>
            <person name="Tapia R."/>
            <person name="Gilna P."/>
            <person name="Schmutz J."/>
            <person name="Larimer F."/>
            <person name="Land M."/>
            <person name="Hauser L."/>
            <person name="Kyrpides N."/>
            <person name="Mikhailova N."/>
            <person name="Richardson P."/>
        </authorList>
    </citation>
    <scope>NUCLEOTIDE SEQUENCE [LARGE SCALE GENOMIC DNA]</scope>
    <source>
        <strain>NCIMB 400</strain>
    </source>
</reference>